<keyword id="KW-0255">Endonuclease</keyword>
<keyword id="KW-0378">Hydrolase</keyword>
<keyword id="KW-0479">Metal-binding</keyword>
<keyword id="KW-0507">mRNA processing</keyword>
<keyword id="KW-0540">Nuclease</keyword>
<keyword id="KW-0539">Nucleus</keyword>
<keyword id="KW-0862">Zinc</keyword>
<sequence length="773" mass="85729">MIPRRHHFKPAPQPTVQVLQPPDEDAPSLTITMLGAGQEVGRSCCVIEHRGKKIVCDAGLHPAQPGIGALPFIDELDWSTVDAMLITHFHVDHAAALPYIMEKTNFKDGNGKVYMTHATKAIYGLTMMDTVRLNDQNPDTSGRLYDEADVQSSWQSTIAVDYHQDIVIAGGLRFTPYHAGHVLGASMFLIEIAGLKILYTGDYSREEDRHLVMAEIPPVKPDVMICESTFGVHTLPDRKEKEEQFTTLVANIVRRGGRCLMPIPSFGNGQELALLLDEYWNDHPELQNIPVYFASSLFQRGMRVYKTYVHTMNANIRSRFARRDNPFDFRFVKWLKDPQKLRENKGPCVIMSSPQFMSFGLSRDLLEEWAPDSKNGVIVTGYSIEGTMARTLLSEPDHIESLKGGNVPRRLTVKEISFGAHVDYAQNSKFIQEIGAQHVVLVHGEASQMGRLRAALRDTYAAKGQEINIHTPKNCEPLTLTFRQERMVKAIGSLAATRPEHGTSVKGLLVSKDFSYTLLSPADLHDFTGLSTSTIIQKQGVAISVDWAVVRWYLEGMYGEVEEGVEEEGKAAFIIMNGVQVVQISPTAVELRWKSSSSNDMIADSALALLLGIDGSPATAKLTASPNKHACNHSNSHSHTDLYPHTYPGDKSAKDVASNPEFERLRMFLEAHFGHVEGPNLRPPLPPGADGDGNDDKDKDGDDWLTMDVKLDNQTARIDLISMRVESESAELQKRVETVLEMALTTVKSLSQTFLGGGLDVDMVKVEPNESDS</sequence>
<proteinExistence type="inferred from homology"/>
<accession>P0CM89</accession>
<accession>Q55IQ8</accession>
<accession>Q5KCZ0</accession>
<comment type="function">
    <text evidence="1">Component of the cleavage factor I (CF I) involved in pre-mRNA 3'-end processing.</text>
</comment>
<comment type="subcellular location">
    <subcellularLocation>
        <location evidence="1">Nucleus</location>
    </subcellularLocation>
</comment>
<comment type="similarity">
    <text evidence="4">Belongs to the metallo-beta-lactamase superfamily. RNA-metabolizing metallo-beta-lactamase-like family. CPSF2/YSH1 subfamily.</text>
</comment>
<gene>
    <name type="primary">YSH1</name>
    <name type="ordered locus">CNBL2750</name>
</gene>
<protein>
    <recommendedName>
        <fullName>Endoribonuclease YSH1</fullName>
        <ecNumber>3.1.27.-</ecNumber>
    </recommendedName>
    <alternativeName>
        <fullName>mRNA 3'-end-processing protein YSH1</fullName>
    </alternativeName>
</protein>
<organism>
    <name type="scientific">Cryptococcus neoformans var. neoformans serotype D (strain B-3501A)</name>
    <name type="common">Filobasidiella neoformans</name>
    <dbReference type="NCBI Taxonomy" id="283643"/>
    <lineage>
        <taxon>Eukaryota</taxon>
        <taxon>Fungi</taxon>
        <taxon>Dikarya</taxon>
        <taxon>Basidiomycota</taxon>
        <taxon>Agaricomycotina</taxon>
        <taxon>Tremellomycetes</taxon>
        <taxon>Tremellales</taxon>
        <taxon>Cryptococcaceae</taxon>
        <taxon>Cryptococcus</taxon>
        <taxon>Cryptococcus neoformans species complex</taxon>
    </lineage>
</organism>
<name>YSH1_CRYNB</name>
<reference key="1">
    <citation type="journal article" date="2005" name="Science">
        <title>The genome of the basidiomycetous yeast and human pathogen Cryptococcus neoformans.</title>
        <authorList>
            <person name="Loftus B.J."/>
            <person name="Fung E."/>
            <person name="Roncaglia P."/>
            <person name="Rowley D."/>
            <person name="Amedeo P."/>
            <person name="Bruno D."/>
            <person name="Vamathevan J."/>
            <person name="Miranda M."/>
            <person name="Anderson I.J."/>
            <person name="Fraser J.A."/>
            <person name="Allen J.E."/>
            <person name="Bosdet I.E."/>
            <person name="Brent M.R."/>
            <person name="Chiu R."/>
            <person name="Doering T.L."/>
            <person name="Donlin M.J."/>
            <person name="D'Souza C.A."/>
            <person name="Fox D.S."/>
            <person name="Grinberg V."/>
            <person name="Fu J."/>
            <person name="Fukushima M."/>
            <person name="Haas B.J."/>
            <person name="Huang J.C."/>
            <person name="Janbon G."/>
            <person name="Jones S.J.M."/>
            <person name="Koo H.L."/>
            <person name="Krzywinski M.I."/>
            <person name="Kwon-Chung K.J."/>
            <person name="Lengeler K.B."/>
            <person name="Maiti R."/>
            <person name="Marra M.A."/>
            <person name="Marra R.E."/>
            <person name="Mathewson C.A."/>
            <person name="Mitchell T.G."/>
            <person name="Pertea M."/>
            <person name="Riggs F.R."/>
            <person name="Salzberg S.L."/>
            <person name="Schein J.E."/>
            <person name="Shvartsbeyn A."/>
            <person name="Shin H."/>
            <person name="Shumway M."/>
            <person name="Specht C.A."/>
            <person name="Suh B.B."/>
            <person name="Tenney A."/>
            <person name="Utterback T.R."/>
            <person name="Wickes B.L."/>
            <person name="Wortman J.R."/>
            <person name="Wye N.H."/>
            <person name="Kronstad J.W."/>
            <person name="Lodge J.K."/>
            <person name="Heitman J."/>
            <person name="Davis R.W."/>
            <person name="Fraser C.M."/>
            <person name="Hyman R.W."/>
        </authorList>
    </citation>
    <scope>NUCLEOTIDE SEQUENCE [LARGE SCALE GENOMIC DNA]</scope>
    <source>
        <strain>B-3501A</strain>
    </source>
</reference>
<dbReference type="EC" id="3.1.27.-"/>
<dbReference type="EMBL" id="AAEY01000057">
    <property type="protein sequence ID" value="EAL17762.1"/>
    <property type="molecule type" value="Genomic_DNA"/>
</dbReference>
<dbReference type="RefSeq" id="XP_772409.1">
    <property type="nucleotide sequence ID" value="XM_767316.1"/>
</dbReference>
<dbReference type="SMR" id="P0CM89"/>
<dbReference type="EnsemblFungi" id="AAW45137">
    <property type="protein sequence ID" value="AAW45137"/>
    <property type="gene ID" value="CNH02710"/>
</dbReference>
<dbReference type="GeneID" id="4939324"/>
<dbReference type="KEGG" id="cnb:CNBL2750"/>
<dbReference type="VEuPathDB" id="FungiDB:CNBL2750"/>
<dbReference type="HOGENOM" id="CLU_009673_2_2_1"/>
<dbReference type="OrthoDB" id="1304at5206"/>
<dbReference type="GO" id="GO:0005847">
    <property type="term" value="C:mRNA cleavage and polyadenylation specificity factor complex"/>
    <property type="evidence" value="ECO:0007669"/>
    <property type="project" value="TreeGrafter"/>
</dbReference>
<dbReference type="GO" id="GO:0004534">
    <property type="term" value="F:5'-3' RNA exonuclease activity"/>
    <property type="evidence" value="ECO:0007669"/>
    <property type="project" value="TreeGrafter"/>
</dbReference>
<dbReference type="GO" id="GO:0046872">
    <property type="term" value="F:metal ion binding"/>
    <property type="evidence" value="ECO:0007669"/>
    <property type="project" value="UniProtKB-KW"/>
</dbReference>
<dbReference type="GO" id="GO:0003723">
    <property type="term" value="F:RNA binding"/>
    <property type="evidence" value="ECO:0007669"/>
    <property type="project" value="TreeGrafter"/>
</dbReference>
<dbReference type="GO" id="GO:0004521">
    <property type="term" value="F:RNA endonuclease activity"/>
    <property type="evidence" value="ECO:0007669"/>
    <property type="project" value="TreeGrafter"/>
</dbReference>
<dbReference type="GO" id="GO:0006398">
    <property type="term" value="P:mRNA 3'-end processing by stem-loop binding and cleavage"/>
    <property type="evidence" value="ECO:0007669"/>
    <property type="project" value="TreeGrafter"/>
</dbReference>
<dbReference type="Gene3D" id="3.40.50.10890">
    <property type="match status" value="1"/>
</dbReference>
<dbReference type="Gene3D" id="3.60.15.10">
    <property type="entry name" value="Ribonuclease Z/Hydroxyacylglutathione hydrolase-like"/>
    <property type="match status" value="1"/>
</dbReference>
<dbReference type="InterPro" id="IPR022712">
    <property type="entry name" value="Beta_Casp"/>
</dbReference>
<dbReference type="InterPro" id="IPR021718">
    <property type="entry name" value="CPSF73-100_C"/>
</dbReference>
<dbReference type="InterPro" id="IPR050698">
    <property type="entry name" value="MBL"/>
</dbReference>
<dbReference type="InterPro" id="IPR001279">
    <property type="entry name" value="Metallo-B-lactamas"/>
</dbReference>
<dbReference type="InterPro" id="IPR036866">
    <property type="entry name" value="RibonucZ/Hydroxyglut_hydro"/>
</dbReference>
<dbReference type="InterPro" id="IPR011108">
    <property type="entry name" value="RMMBL"/>
</dbReference>
<dbReference type="PANTHER" id="PTHR11203">
    <property type="entry name" value="CLEAVAGE AND POLYADENYLATION SPECIFICITY FACTOR FAMILY MEMBER"/>
    <property type="match status" value="1"/>
</dbReference>
<dbReference type="PANTHER" id="PTHR11203:SF11">
    <property type="entry name" value="CLEAVAGE AND POLYADENYLATION SPECIFICITY FACTOR SUBUNIT 3"/>
    <property type="match status" value="1"/>
</dbReference>
<dbReference type="Pfam" id="PF10996">
    <property type="entry name" value="Beta-Casp"/>
    <property type="match status" value="1"/>
</dbReference>
<dbReference type="Pfam" id="PF11718">
    <property type="entry name" value="CPSF73-100_C"/>
    <property type="match status" value="1"/>
</dbReference>
<dbReference type="Pfam" id="PF16661">
    <property type="entry name" value="Lactamase_B_6"/>
    <property type="match status" value="1"/>
</dbReference>
<dbReference type="Pfam" id="PF07521">
    <property type="entry name" value="RMMBL"/>
    <property type="match status" value="1"/>
</dbReference>
<dbReference type="SMART" id="SM01027">
    <property type="entry name" value="Beta-Casp"/>
    <property type="match status" value="1"/>
</dbReference>
<dbReference type="SMART" id="SM01098">
    <property type="entry name" value="CPSF73-100_C"/>
    <property type="match status" value="1"/>
</dbReference>
<dbReference type="SMART" id="SM00849">
    <property type="entry name" value="Lactamase_B"/>
    <property type="match status" value="1"/>
</dbReference>
<dbReference type="SUPFAM" id="SSF56281">
    <property type="entry name" value="Metallo-hydrolase/oxidoreductase"/>
    <property type="match status" value="1"/>
</dbReference>
<evidence type="ECO:0000250" key="1"/>
<evidence type="ECO:0000255" key="2"/>
<evidence type="ECO:0000256" key="3">
    <source>
        <dbReference type="SAM" id="MobiDB-lite"/>
    </source>
</evidence>
<evidence type="ECO:0000305" key="4"/>
<feature type="chain" id="PRO_0000410047" description="Endoribonuclease YSH1">
    <location>
        <begin position="1"/>
        <end position="773"/>
    </location>
</feature>
<feature type="region of interest" description="Disordered" evidence="3">
    <location>
        <begin position="1"/>
        <end position="22"/>
    </location>
</feature>
<feature type="region of interest" description="Disordered" evidence="3">
    <location>
        <begin position="624"/>
        <end position="656"/>
    </location>
</feature>
<feature type="region of interest" description="Disordered" evidence="3">
    <location>
        <begin position="677"/>
        <end position="702"/>
    </location>
</feature>
<feature type="compositionally biased region" description="Polar residues" evidence="3">
    <location>
        <begin position="624"/>
        <end position="637"/>
    </location>
</feature>
<feature type="active site" description="Proton donor" evidence="2">
    <location>
        <position position="421"/>
    </location>
</feature>
<feature type="binding site" evidence="1">
    <location>
        <position position="88"/>
    </location>
    <ligand>
        <name>Zn(2+)</name>
        <dbReference type="ChEBI" id="CHEBI:29105"/>
        <label>1</label>
    </ligand>
</feature>
<feature type="binding site" evidence="1">
    <location>
        <position position="90"/>
    </location>
    <ligand>
        <name>Zn(2+)</name>
        <dbReference type="ChEBI" id="CHEBI:29105"/>
        <label>1</label>
    </ligand>
</feature>
<feature type="binding site" evidence="1">
    <location>
        <position position="92"/>
    </location>
    <ligand>
        <name>Zn(2+)</name>
        <dbReference type="ChEBI" id="CHEBI:29105"/>
        <label>2</label>
    </ligand>
</feature>
<feature type="binding site" evidence="1">
    <location>
        <position position="93"/>
    </location>
    <ligand>
        <name>Zn(2+)</name>
        <dbReference type="ChEBI" id="CHEBI:29105"/>
        <label>2</label>
    </ligand>
</feature>
<feature type="binding site" evidence="1">
    <location>
        <position position="181"/>
    </location>
    <ligand>
        <name>Zn(2+)</name>
        <dbReference type="ChEBI" id="CHEBI:29105"/>
        <label>1</label>
    </ligand>
</feature>
<feature type="binding site" evidence="1">
    <location>
        <position position="202"/>
    </location>
    <ligand>
        <name>Zn(2+)</name>
        <dbReference type="ChEBI" id="CHEBI:29105"/>
        <label>1</label>
    </ligand>
</feature>
<feature type="binding site" evidence="1">
    <location>
        <position position="202"/>
    </location>
    <ligand>
        <name>Zn(2+)</name>
        <dbReference type="ChEBI" id="CHEBI:29105"/>
        <label>2</label>
    </ligand>
</feature>
<feature type="binding site" evidence="1">
    <location>
        <position position="443"/>
    </location>
    <ligand>
        <name>Zn(2+)</name>
        <dbReference type="ChEBI" id="CHEBI:29105"/>
        <label>2</label>
    </ligand>
</feature>